<sequence>MVNFCGKEFSSRLLIGSALYESPAIMQDAIRAAGAEIVTVSLRRETAGGKAGDVFWSLIRELGVTVLPNTAGCRTVREAVTTARLARELFGTSWIKLEVIGDNDTLQPDVVGLVEAATELVNDGFEVFPYCTEDLSVAMRLVDAGCKVVMPWAAPIGSARGITNRDALRLLRDRLPDITLVVDAGLGAPSHAAAALELGFDAVLLNTAIAKAADSVAMAGAFKLAVEAGRIAYESGLMDARDFASPSTPVIGTPFWHAVS</sequence>
<keyword id="KW-0963">Cytoplasm</keyword>
<keyword id="KW-0704">Schiff base</keyword>
<keyword id="KW-0784">Thiamine biosynthesis</keyword>
<keyword id="KW-0808">Transferase</keyword>
<accession>Q216G8</accession>
<gene>
    <name evidence="1" type="primary">thiG</name>
    <name type="ordered locus">RPC_2164</name>
</gene>
<proteinExistence type="inferred from homology"/>
<dbReference type="EC" id="2.8.1.10" evidence="1"/>
<dbReference type="EMBL" id="CP000301">
    <property type="protein sequence ID" value="ABD87718.1"/>
    <property type="molecule type" value="Genomic_DNA"/>
</dbReference>
<dbReference type="SMR" id="Q216G8"/>
<dbReference type="STRING" id="316056.RPC_2164"/>
<dbReference type="KEGG" id="rpc:RPC_2164"/>
<dbReference type="eggNOG" id="COG2022">
    <property type="taxonomic scope" value="Bacteria"/>
</dbReference>
<dbReference type="HOGENOM" id="CLU_062233_1_0_5"/>
<dbReference type="OrthoDB" id="9805935at2"/>
<dbReference type="UniPathway" id="UPA00060"/>
<dbReference type="GO" id="GO:0005737">
    <property type="term" value="C:cytoplasm"/>
    <property type="evidence" value="ECO:0007669"/>
    <property type="project" value="UniProtKB-SubCell"/>
</dbReference>
<dbReference type="GO" id="GO:1990107">
    <property type="term" value="F:thiazole synthase activity"/>
    <property type="evidence" value="ECO:0007669"/>
    <property type="project" value="UniProtKB-EC"/>
</dbReference>
<dbReference type="GO" id="GO:0009229">
    <property type="term" value="P:thiamine diphosphate biosynthetic process"/>
    <property type="evidence" value="ECO:0007669"/>
    <property type="project" value="UniProtKB-UniRule"/>
</dbReference>
<dbReference type="CDD" id="cd04728">
    <property type="entry name" value="ThiG"/>
    <property type="match status" value="1"/>
</dbReference>
<dbReference type="Gene3D" id="3.20.20.70">
    <property type="entry name" value="Aldolase class I"/>
    <property type="match status" value="1"/>
</dbReference>
<dbReference type="HAMAP" id="MF_00443">
    <property type="entry name" value="ThiG"/>
    <property type="match status" value="1"/>
</dbReference>
<dbReference type="InterPro" id="IPR013785">
    <property type="entry name" value="Aldolase_TIM"/>
</dbReference>
<dbReference type="InterPro" id="IPR033983">
    <property type="entry name" value="Thiazole_synthase_ThiG"/>
</dbReference>
<dbReference type="InterPro" id="IPR008867">
    <property type="entry name" value="ThiG"/>
</dbReference>
<dbReference type="PANTHER" id="PTHR34266">
    <property type="entry name" value="THIAZOLE SYNTHASE"/>
    <property type="match status" value="1"/>
</dbReference>
<dbReference type="PANTHER" id="PTHR34266:SF2">
    <property type="entry name" value="THIAZOLE SYNTHASE"/>
    <property type="match status" value="1"/>
</dbReference>
<dbReference type="Pfam" id="PF05690">
    <property type="entry name" value="ThiG"/>
    <property type="match status" value="1"/>
</dbReference>
<dbReference type="SUPFAM" id="SSF110399">
    <property type="entry name" value="ThiG-like"/>
    <property type="match status" value="1"/>
</dbReference>
<evidence type="ECO:0000255" key="1">
    <source>
        <dbReference type="HAMAP-Rule" id="MF_00443"/>
    </source>
</evidence>
<name>THIG_RHOPB</name>
<feature type="chain" id="PRO_1000026037" description="Thiazole synthase">
    <location>
        <begin position="1"/>
        <end position="260"/>
    </location>
</feature>
<feature type="active site" description="Schiff-base intermediate with DXP" evidence="1">
    <location>
        <position position="96"/>
    </location>
</feature>
<feature type="binding site" evidence="1">
    <location>
        <position position="157"/>
    </location>
    <ligand>
        <name>1-deoxy-D-xylulose 5-phosphate</name>
        <dbReference type="ChEBI" id="CHEBI:57792"/>
    </ligand>
</feature>
<feature type="binding site" evidence="1">
    <location>
        <begin position="184"/>
        <end position="185"/>
    </location>
    <ligand>
        <name>1-deoxy-D-xylulose 5-phosphate</name>
        <dbReference type="ChEBI" id="CHEBI:57792"/>
    </ligand>
</feature>
<feature type="binding site" evidence="1">
    <location>
        <begin position="206"/>
        <end position="207"/>
    </location>
    <ligand>
        <name>1-deoxy-D-xylulose 5-phosphate</name>
        <dbReference type="ChEBI" id="CHEBI:57792"/>
    </ligand>
</feature>
<protein>
    <recommendedName>
        <fullName evidence="1">Thiazole synthase</fullName>
        <ecNumber evidence="1">2.8.1.10</ecNumber>
    </recommendedName>
</protein>
<organism>
    <name type="scientific">Rhodopseudomonas palustris (strain BisB18)</name>
    <dbReference type="NCBI Taxonomy" id="316056"/>
    <lineage>
        <taxon>Bacteria</taxon>
        <taxon>Pseudomonadati</taxon>
        <taxon>Pseudomonadota</taxon>
        <taxon>Alphaproteobacteria</taxon>
        <taxon>Hyphomicrobiales</taxon>
        <taxon>Nitrobacteraceae</taxon>
        <taxon>Rhodopseudomonas</taxon>
    </lineage>
</organism>
<comment type="function">
    <text evidence="1">Catalyzes the rearrangement of 1-deoxy-D-xylulose 5-phosphate (DXP) to produce the thiazole phosphate moiety of thiamine. Sulfur is provided by the thiocarboxylate moiety of the carrier protein ThiS. In vitro, sulfur can be provided by H(2)S.</text>
</comment>
<comment type="catalytic activity">
    <reaction evidence="1">
        <text>[ThiS sulfur-carrier protein]-C-terminal-Gly-aminoethanethioate + 2-iminoacetate + 1-deoxy-D-xylulose 5-phosphate = [ThiS sulfur-carrier protein]-C-terminal Gly-Gly + 2-[(2R,5Z)-2-carboxy-4-methylthiazol-5(2H)-ylidene]ethyl phosphate + 2 H2O + H(+)</text>
        <dbReference type="Rhea" id="RHEA:26297"/>
        <dbReference type="Rhea" id="RHEA-COMP:12909"/>
        <dbReference type="Rhea" id="RHEA-COMP:19908"/>
        <dbReference type="ChEBI" id="CHEBI:15377"/>
        <dbReference type="ChEBI" id="CHEBI:15378"/>
        <dbReference type="ChEBI" id="CHEBI:57792"/>
        <dbReference type="ChEBI" id="CHEBI:62899"/>
        <dbReference type="ChEBI" id="CHEBI:77846"/>
        <dbReference type="ChEBI" id="CHEBI:90778"/>
        <dbReference type="ChEBI" id="CHEBI:232372"/>
        <dbReference type="EC" id="2.8.1.10"/>
    </reaction>
</comment>
<comment type="pathway">
    <text evidence="1">Cofactor biosynthesis; thiamine diphosphate biosynthesis.</text>
</comment>
<comment type="subunit">
    <text evidence="1">Homotetramer. Forms heterodimers with either ThiH or ThiS.</text>
</comment>
<comment type="subcellular location">
    <subcellularLocation>
        <location evidence="1">Cytoplasm</location>
    </subcellularLocation>
</comment>
<comment type="similarity">
    <text evidence="1">Belongs to the ThiG family.</text>
</comment>
<reference key="1">
    <citation type="submission" date="2006-03" db="EMBL/GenBank/DDBJ databases">
        <title>Complete sequence of Rhodopseudomonas palustris BisB18.</title>
        <authorList>
            <consortium name="US DOE Joint Genome Institute"/>
            <person name="Copeland A."/>
            <person name="Lucas S."/>
            <person name="Lapidus A."/>
            <person name="Barry K."/>
            <person name="Detter J.C."/>
            <person name="Glavina del Rio T."/>
            <person name="Hammon N."/>
            <person name="Israni S."/>
            <person name="Dalin E."/>
            <person name="Tice H."/>
            <person name="Pitluck S."/>
            <person name="Chain P."/>
            <person name="Malfatti S."/>
            <person name="Shin M."/>
            <person name="Vergez L."/>
            <person name="Schmutz J."/>
            <person name="Larimer F."/>
            <person name="Land M."/>
            <person name="Hauser L."/>
            <person name="Pelletier D.A."/>
            <person name="Kyrpides N."/>
            <person name="Anderson I."/>
            <person name="Oda Y."/>
            <person name="Harwood C.S."/>
            <person name="Richardson P."/>
        </authorList>
    </citation>
    <scope>NUCLEOTIDE SEQUENCE [LARGE SCALE GENOMIC DNA]</scope>
    <source>
        <strain>BisB18</strain>
    </source>
</reference>